<proteinExistence type="inferred from homology"/>
<name>TUBE_BPT6</name>
<gene>
    <name type="primary">19</name>
</gene>
<comment type="function">
    <text evidence="1">Structural component of the bacteriophage tail which consists of a contractile sheath, a tube and a baseplate. The central cylindrical segment of the tail consists of a rigid tube, composed of multiple copies of the tail tube protein. During infection, contraction of the sheath drives the central tube through the host outer membrane, creating a channel for DNA ejection from the capsid into the host cell.</text>
</comment>
<comment type="subcellular location">
    <subcellularLocation>
        <location evidence="1">Virion</location>
    </subcellularLocation>
</comment>
<comment type="similarity">
    <text evidence="2">Belongs to the T4-like viruses Gp19 protein family.</text>
</comment>
<dbReference type="EMBL" id="Z35072">
    <property type="protein sequence ID" value="CAA84444.1"/>
    <property type="molecule type" value="Genomic_DNA"/>
</dbReference>
<dbReference type="SMR" id="Q38435"/>
<dbReference type="GO" id="GO:0098026">
    <property type="term" value="C:virus tail, tube"/>
    <property type="evidence" value="ECO:0007669"/>
    <property type="project" value="UniProtKB-KW"/>
</dbReference>
<dbReference type="GO" id="GO:0005198">
    <property type="term" value="F:structural molecule activity"/>
    <property type="evidence" value="ECO:0007669"/>
    <property type="project" value="InterPro"/>
</dbReference>
<dbReference type="GO" id="GO:0099000">
    <property type="term" value="P:symbiont genome ejection through host cell envelope, contractile tail mechanism"/>
    <property type="evidence" value="ECO:0007669"/>
    <property type="project" value="UniProtKB-KW"/>
</dbReference>
<dbReference type="InterPro" id="IPR010667">
    <property type="entry name" value="Phage_T4_Gp19"/>
</dbReference>
<dbReference type="Pfam" id="PF06841">
    <property type="entry name" value="Phage_T4_gp19"/>
    <property type="match status" value="1"/>
</dbReference>
<evidence type="ECO:0000250" key="1">
    <source>
        <dbReference type="UniProtKB" id="P13333"/>
    </source>
</evidence>
<evidence type="ECO:0000305" key="2"/>
<feature type="chain" id="PRO_0000165009" description="Tail tube protein gp19">
    <location>
        <begin position="1"/>
        <end position="163"/>
    </location>
</feature>
<organismHost>
    <name type="scientific">Escherichia coli</name>
    <dbReference type="NCBI Taxonomy" id="562"/>
</organismHost>
<protein>
    <recommendedName>
        <fullName>Tail tube protein gp19</fullName>
    </recommendedName>
    <alternativeName>
        <fullName>Gene product 19</fullName>
        <shortName>gp19</shortName>
    </alternativeName>
</protein>
<sequence length="163" mass="18450">MFVDDVTRAFESGDFARPNLFQVEISYLGQNFTFQCKATALPAGIVEKIPVGFMNRKINDAGDRTFDDWTVTVMNDEAHDARQKFVDWQSIAAGQGNEITGGKPAEYKKSAVVRQYARDAKTVTKEVEIKGLWPTNVGELQLDWDSNNEIQTFEVTLALDYWE</sequence>
<accession>Q38435</accession>
<organism>
    <name type="scientific">Enterobacteria phage T6</name>
    <name type="common">Bacteriophage T6</name>
    <dbReference type="NCBI Taxonomy" id="10666"/>
    <lineage>
        <taxon>Viruses</taxon>
        <taxon>Duplodnaviria</taxon>
        <taxon>Heunggongvirae</taxon>
        <taxon>Uroviricota</taxon>
        <taxon>Caudoviricetes</taxon>
        <taxon>Straboviridae</taxon>
        <taxon>Tevenvirinae</taxon>
        <taxon>Tequatrovirus</taxon>
        <taxon>Tequatrovirus T6</taxon>
    </lineage>
</organism>
<reference key="1">
    <citation type="journal article" date="1994" name="EMBO J.">
        <title>Genomic polymorphism in the T-even bacteriophages.</title>
        <authorList>
            <person name="Repoila F."/>
            <person name="Tetart F."/>
            <person name="Bouet J.-Y."/>
            <person name="Krisch H.M."/>
        </authorList>
    </citation>
    <scope>NUCLEOTIDE SEQUENCE [GENOMIC DNA]</scope>
</reference>
<keyword id="KW-0426">Late protein</keyword>
<keyword id="KW-1242">Viral contractile tail ejection system</keyword>
<keyword id="KW-1171">Viral genome ejection through host cell envelope</keyword>
<keyword id="KW-1162">Viral penetration into host cytoplasm</keyword>
<keyword id="KW-1227">Viral tail protein</keyword>
<keyword id="KW-1228">Viral tail tube protein</keyword>
<keyword id="KW-0946">Virion</keyword>
<keyword id="KW-1160">Virus entry into host cell</keyword>